<feature type="chain" id="PRO_0000218612" description="Peroxisome assembly protein 12">
    <location>
        <begin position="1"/>
        <end position="359"/>
    </location>
</feature>
<feature type="topological domain" description="Peroxisomal matrix" evidence="1">
    <location>
        <begin position="1"/>
        <end position="19"/>
    </location>
</feature>
<feature type="transmembrane region" description="Helical; Name=TM1" evidence="1">
    <location>
        <begin position="20"/>
        <end position="47"/>
    </location>
</feature>
<feature type="topological domain" description="Cytoplasmic" evidence="1">
    <location>
        <begin position="48"/>
        <end position="51"/>
    </location>
</feature>
<feature type="transmembrane region" description="Helical; Name=TM2" evidence="1">
    <location>
        <begin position="52"/>
        <end position="76"/>
    </location>
</feature>
<feature type="topological domain" description="Peroxisomal matrix" evidence="1">
    <location>
        <begin position="77"/>
        <end position="109"/>
    </location>
</feature>
<feature type="transmembrane region" description="Helical; Name=TM3" evidence="1">
    <location>
        <begin position="110"/>
        <end position="139"/>
    </location>
</feature>
<feature type="topological domain" description="Cytoplasmic" evidence="1">
    <location>
        <begin position="140"/>
        <end position="144"/>
    </location>
</feature>
<feature type="transmembrane region" description="Helical; Name=TM4" evidence="1">
    <location>
        <begin position="145"/>
        <end position="183"/>
    </location>
</feature>
<feature type="topological domain" description="Peroxisomal matrix" evidence="1">
    <location>
        <begin position="184"/>
        <end position="249"/>
    </location>
</feature>
<feature type="transmembrane region" description="Helical; Name=TM5" evidence="1">
    <location>
        <begin position="250"/>
        <end position="277"/>
    </location>
</feature>
<feature type="topological domain" description="Cytoplasmic" evidence="1">
    <location>
        <begin position="278"/>
        <end position="359"/>
    </location>
</feature>
<feature type="zinc finger region" description="RING-type; degenerate">
    <location>
        <begin position="304"/>
        <end position="343"/>
    </location>
</feature>
<feature type="binding site" evidence="1">
    <location>
        <position position="304"/>
    </location>
    <ligand>
        <name>Zn(2+)</name>
        <dbReference type="ChEBI" id="CHEBI:29105"/>
    </ligand>
</feature>
<feature type="binding site" evidence="1">
    <location>
        <position position="307"/>
    </location>
    <ligand>
        <name>Zn(2+)</name>
        <dbReference type="ChEBI" id="CHEBI:29105"/>
    </ligand>
</feature>
<feature type="binding site" evidence="1">
    <location>
        <position position="325"/>
    </location>
    <ligand>
        <name>Zn(2+)</name>
        <dbReference type="ChEBI" id="CHEBI:29105"/>
    </ligand>
</feature>
<feature type="binding site" evidence="1">
    <location>
        <position position="328"/>
    </location>
    <ligand>
        <name>Zn(2+)</name>
        <dbReference type="ChEBI" id="CHEBI:29105"/>
    </ligand>
</feature>
<sequence>MAEHGAHITTASVADDQPSIFEVVAQDSLMTAVRPALQHVVKVLAESNPAHYGFFWRWFDEIFTLLDFLLQQHYLSRTSASFSEHFYGLKRIVAGSSPQLQRPASAGLPKEHLWKSAMFLVLLPYLKVKLEKLASTLREEDEYSIHPPSSHWKRFYRVFLAAYPFVTMTWEGWFLTQQLRYILGKAEHHSPLLKLAGVRLGRLTAQDIQAMEHRLVEASAMQEPVRSIGKKIKSALKKAVGGVALSLSTGLSVGVFFLQFLDWWYSSENQETIKSLTALPTPPPPVHLDYNSDSPLLPKMKTVCPLCRKARVNDTVLATSGYVFCYRCVFNYVRSHQACPITGYPTEVQHLIKLYSPEN</sequence>
<accession>O88177</accession>
<protein>
    <recommendedName>
        <fullName evidence="6">Peroxisome assembly protein 12</fullName>
    </recommendedName>
    <alternativeName>
        <fullName evidence="6">Peroxin-12</fullName>
    </alternativeName>
    <alternativeName>
        <fullName>Peroxisome assembly factor 3</fullName>
        <shortName>PAF-3</shortName>
    </alternativeName>
</protein>
<dbReference type="EMBL" id="AB002111">
    <property type="protein sequence ID" value="BAA31558.1"/>
    <property type="molecule type" value="mRNA"/>
</dbReference>
<dbReference type="EMBL" id="BC072481">
    <property type="protein sequence ID" value="AAH72481.1"/>
    <property type="molecule type" value="mRNA"/>
</dbReference>
<dbReference type="RefSeq" id="NP_446373.1">
    <property type="nucleotide sequence ID" value="NM_053921.1"/>
</dbReference>
<dbReference type="RefSeq" id="XP_003750938.1">
    <property type="nucleotide sequence ID" value="XM_003750890.4"/>
</dbReference>
<dbReference type="RefSeq" id="XP_008766156.1">
    <property type="nucleotide sequence ID" value="XM_008767934.2"/>
</dbReference>
<dbReference type="RefSeq" id="XP_008772090.1">
    <property type="nucleotide sequence ID" value="XM_008773868.2"/>
</dbReference>
<dbReference type="RefSeq" id="XP_017452452.1">
    <property type="nucleotide sequence ID" value="XM_017596963.1"/>
</dbReference>
<dbReference type="RefSeq" id="XP_017458013.1">
    <property type="nucleotide sequence ID" value="XM_017602524.1"/>
</dbReference>
<dbReference type="SMR" id="O88177"/>
<dbReference type="CORUM" id="O88177"/>
<dbReference type="FunCoup" id="O88177">
    <property type="interactions" value="2002"/>
</dbReference>
<dbReference type="STRING" id="10116.ENSRNOP00000013233"/>
<dbReference type="GlyGen" id="O88177">
    <property type="glycosylation" value="1 site"/>
</dbReference>
<dbReference type="PhosphoSitePlus" id="O88177"/>
<dbReference type="PaxDb" id="10116-ENSRNOP00000013233"/>
<dbReference type="Ensembl" id="ENSRNOT00000013233.5">
    <property type="protein sequence ID" value="ENSRNOP00000013233.1"/>
    <property type="gene ID" value="ENSRNOG00000009718.5"/>
</dbReference>
<dbReference type="GeneID" id="116718"/>
<dbReference type="KEGG" id="rno:116718"/>
<dbReference type="AGR" id="RGD:620757"/>
<dbReference type="CTD" id="5193"/>
<dbReference type="RGD" id="620757">
    <property type="gene designation" value="Pex12"/>
</dbReference>
<dbReference type="eggNOG" id="KOG0826">
    <property type="taxonomic scope" value="Eukaryota"/>
</dbReference>
<dbReference type="GeneTree" id="ENSGT00390000016209"/>
<dbReference type="HOGENOM" id="CLU_031067_1_0_1"/>
<dbReference type="InParanoid" id="O88177"/>
<dbReference type="OMA" id="QHYLARC"/>
<dbReference type="OrthoDB" id="107372at2759"/>
<dbReference type="PhylomeDB" id="O88177"/>
<dbReference type="TreeFam" id="TF314511"/>
<dbReference type="Reactome" id="R-RNO-8866654">
    <property type="pathway name" value="E3 ubiquitin ligases ubiquitinate target proteins"/>
</dbReference>
<dbReference type="Reactome" id="R-RNO-9033241">
    <property type="pathway name" value="Peroxisomal protein import"/>
</dbReference>
<dbReference type="Reactome" id="R-RNO-9603798">
    <property type="pathway name" value="Class I peroxisomal membrane protein import"/>
</dbReference>
<dbReference type="UniPathway" id="UPA00143"/>
<dbReference type="PRO" id="PR:O88177"/>
<dbReference type="Proteomes" id="UP000002494">
    <property type="component" value="Chromosome 10"/>
</dbReference>
<dbReference type="Bgee" id="ENSRNOG00000009718">
    <property type="expression patterns" value="Expressed in testis and 19 other cell types or tissues"/>
</dbReference>
<dbReference type="GO" id="GO:1990429">
    <property type="term" value="C:peroxisomal importomer complex"/>
    <property type="evidence" value="ECO:0000318"/>
    <property type="project" value="GO_Central"/>
</dbReference>
<dbReference type="GO" id="GO:0005778">
    <property type="term" value="C:peroxisomal membrane"/>
    <property type="evidence" value="ECO:0000314"/>
    <property type="project" value="UniProtKB"/>
</dbReference>
<dbReference type="GO" id="GO:0005777">
    <property type="term" value="C:peroxisome"/>
    <property type="evidence" value="ECO:0000314"/>
    <property type="project" value="RGD"/>
</dbReference>
<dbReference type="GO" id="GO:1990757">
    <property type="term" value="F:ubiquitin ligase activator activity"/>
    <property type="evidence" value="ECO:0000266"/>
    <property type="project" value="RGD"/>
</dbReference>
<dbReference type="GO" id="GO:0004842">
    <property type="term" value="F:ubiquitin-protein transferase activity"/>
    <property type="evidence" value="ECO:0000318"/>
    <property type="project" value="GO_Central"/>
</dbReference>
<dbReference type="GO" id="GO:0008270">
    <property type="term" value="F:zinc ion binding"/>
    <property type="evidence" value="ECO:0000266"/>
    <property type="project" value="RGD"/>
</dbReference>
<dbReference type="GO" id="GO:0034614">
    <property type="term" value="P:cellular response to reactive oxygen species"/>
    <property type="evidence" value="ECO:0000266"/>
    <property type="project" value="RGD"/>
</dbReference>
<dbReference type="GO" id="GO:0007031">
    <property type="term" value="P:peroxisome organization"/>
    <property type="evidence" value="ECO:0000315"/>
    <property type="project" value="RGD"/>
</dbReference>
<dbReference type="GO" id="GO:0016558">
    <property type="term" value="P:protein import into peroxisome matrix"/>
    <property type="evidence" value="ECO:0000266"/>
    <property type="project" value="RGD"/>
</dbReference>
<dbReference type="GO" id="GO:0016562">
    <property type="term" value="P:protein import into peroxisome matrix, receptor recycling"/>
    <property type="evidence" value="ECO:0000266"/>
    <property type="project" value="RGD"/>
</dbReference>
<dbReference type="GO" id="GO:0006513">
    <property type="term" value="P:protein monoubiquitination"/>
    <property type="evidence" value="ECO:0000318"/>
    <property type="project" value="GO_Central"/>
</dbReference>
<dbReference type="GO" id="GO:0000209">
    <property type="term" value="P:protein polyubiquitination"/>
    <property type="evidence" value="ECO:0000266"/>
    <property type="project" value="RGD"/>
</dbReference>
<dbReference type="CDD" id="cd16451">
    <property type="entry name" value="mRING_PEX12"/>
    <property type="match status" value="1"/>
</dbReference>
<dbReference type="FunFam" id="3.30.40.10:FF:000266">
    <property type="entry name" value="Peroxisome assembly protein 12"/>
    <property type="match status" value="1"/>
</dbReference>
<dbReference type="Gene3D" id="3.30.40.10">
    <property type="entry name" value="Zinc/RING finger domain, C3HC4 (zinc finger)"/>
    <property type="match status" value="1"/>
</dbReference>
<dbReference type="InterPro" id="IPR017375">
    <property type="entry name" value="PEX12"/>
</dbReference>
<dbReference type="InterPro" id="IPR006845">
    <property type="entry name" value="Pex_N"/>
</dbReference>
<dbReference type="InterPro" id="IPR013083">
    <property type="entry name" value="Znf_RING/FYVE/PHD"/>
</dbReference>
<dbReference type="PANTHER" id="PTHR12888:SF0">
    <property type="entry name" value="PEROXISOME ASSEMBLY PROTEIN 12"/>
    <property type="match status" value="1"/>
</dbReference>
<dbReference type="PANTHER" id="PTHR12888">
    <property type="entry name" value="PEROXISOME ASSEMBLY PROTEIN 12 PEROXIN-12"/>
    <property type="match status" value="1"/>
</dbReference>
<dbReference type="Pfam" id="PF04757">
    <property type="entry name" value="Pex2_Pex12"/>
    <property type="match status" value="1"/>
</dbReference>
<dbReference type="PIRSF" id="PIRSF038074">
    <property type="entry name" value="Peroxisome_assembly_p12"/>
    <property type="match status" value="1"/>
</dbReference>
<dbReference type="SUPFAM" id="SSF57850">
    <property type="entry name" value="RING/U-box"/>
    <property type="match status" value="1"/>
</dbReference>
<organism>
    <name type="scientific">Rattus norvegicus</name>
    <name type="common">Rat</name>
    <dbReference type="NCBI Taxonomy" id="10116"/>
    <lineage>
        <taxon>Eukaryota</taxon>
        <taxon>Metazoa</taxon>
        <taxon>Chordata</taxon>
        <taxon>Craniata</taxon>
        <taxon>Vertebrata</taxon>
        <taxon>Euteleostomi</taxon>
        <taxon>Mammalia</taxon>
        <taxon>Eutheria</taxon>
        <taxon>Euarchontoglires</taxon>
        <taxon>Glires</taxon>
        <taxon>Rodentia</taxon>
        <taxon>Myomorpha</taxon>
        <taxon>Muroidea</taxon>
        <taxon>Muridae</taxon>
        <taxon>Murinae</taxon>
        <taxon>Rattus</taxon>
    </lineage>
</organism>
<keyword id="KW-0472">Membrane</keyword>
<keyword id="KW-0479">Metal-binding</keyword>
<keyword id="KW-0576">Peroxisome</keyword>
<keyword id="KW-0653">Protein transport</keyword>
<keyword id="KW-1185">Reference proteome</keyword>
<keyword id="KW-0812">Transmembrane</keyword>
<keyword id="KW-1133">Transmembrane helix</keyword>
<keyword id="KW-0813">Transport</keyword>
<keyword id="KW-0833">Ubl conjugation pathway</keyword>
<keyword id="KW-0862">Zinc</keyword>
<keyword id="KW-0863">Zinc-finger</keyword>
<name>PEX12_RAT</name>
<reference key="1">
    <citation type="journal article" date="1998" name="Mol. Cell. Biol.">
        <title>PEX12, the pathogenic gene of group III Zellweger syndrome: cDNA cloning by functional complementation on a CHO cell mutant, patient analysis, and characterization of PEX12p.</title>
        <authorList>
            <person name="Okumoto K."/>
            <person name="Shimozawa N."/>
            <person name="Kawai A."/>
            <person name="Tamura S."/>
            <person name="Tsukamoto T."/>
            <person name="Osumi T."/>
            <person name="Moser H."/>
            <person name="Wanders R.J.A."/>
            <person name="Suzuki Y."/>
            <person name="Kondo N."/>
            <person name="Fujiki Y."/>
        </authorList>
    </citation>
    <scope>NUCLEOTIDE SEQUENCE [MRNA]</scope>
</reference>
<reference key="2">
    <citation type="journal article" date="2004" name="Genome Res.">
        <title>The status, quality, and expansion of the NIH full-length cDNA project: the Mammalian Gene Collection (MGC).</title>
        <authorList>
            <consortium name="The MGC Project Team"/>
        </authorList>
    </citation>
    <scope>NUCLEOTIDE SEQUENCE [LARGE SCALE MRNA]</scope>
    <source>
        <tissue>Heart</tissue>
    </source>
</reference>
<reference key="3">
    <citation type="journal article" date="1997" name="Nat. Genet.">
        <title>PEX12 encodes an integral membrane protein of peroxisomes.</title>
        <authorList>
            <person name="Okumoto K."/>
            <person name="Fujiki Y."/>
        </authorList>
    </citation>
    <scope>SUBCELLULAR LOCATION</scope>
</reference>
<comment type="function">
    <text evidence="2 3">Component of a retrotranslocation channel required for peroxisome organization by mediating export of the PEX5 receptor from peroxisomes to the cytosol, thereby promoting PEX5 recycling (By similarity). The retrotranslocation channel is composed of PEX2, PEX10 and PEX12; each subunit contributing transmembrane segments that coassemble into an open channel that specifically allows the passage of PEX5 through the peroxisomal membrane (By similarity). PEX12 also regulates PEX5 recycling by activating the E3 ubiquitin-protein ligase activity of PEX10 (By similarity). When PEX5 recycling is compromised, PEX12 stimulates PEX10-mediated polyubiquitination of PEX5, leading to its subsequent degradation (By similarity).</text>
</comment>
<comment type="pathway">
    <text evidence="2">Protein modification; protein ubiquitination.</text>
</comment>
<comment type="subunit">
    <text evidence="2">Component of the PEX2-PEX10-PEX12 retrotranslocation channel, composed of PEX2, PEX10 and PEX12. Interacts with PEX19 via its cytoplasmic domain.</text>
</comment>
<comment type="subcellular location">
    <subcellularLocation>
        <location evidence="5">Peroxisome membrane</location>
        <topology evidence="4">Multi-pass membrane protein</topology>
    </subcellularLocation>
</comment>
<comment type="domain">
    <text evidence="1">The three subunits of the retrotranslocation channel (PEX2, PEX10 and PEX12) coassemble in the membrane into a channel with an open 10 Angstrom pore. The RING-type zinc-fingers that catalyze PEX5 receptor ubiquitination are positioned above the pore on the cytosolic side of the complex.</text>
</comment>
<comment type="domain">
    <text evidence="3">The RING-type zinc-finger is degenerated and only coordinates one zinc ions, preventing E3 ubiquitin-protein ligase activity.</text>
</comment>
<comment type="similarity">
    <text evidence="6">Belongs to the pex2/pex10/pex12 family.</text>
</comment>
<proteinExistence type="evidence at transcript level"/>
<evidence type="ECO:0000250" key="1">
    <source>
        <dbReference type="UniProtKB" id="G2Q5N0"/>
    </source>
</evidence>
<evidence type="ECO:0000250" key="2">
    <source>
        <dbReference type="UniProtKB" id="O00623"/>
    </source>
</evidence>
<evidence type="ECO:0000250" key="3">
    <source>
        <dbReference type="UniProtKB" id="Q04370"/>
    </source>
</evidence>
<evidence type="ECO:0000255" key="4"/>
<evidence type="ECO:0000269" key="5">
    <source>
    </source>
</evidence>
<evidence type="ECO:0000305" key="6"/>
<gene>
    <name type="primary">Pex12</name>
    <name type="synonym">Paf3</name>
</gene>